<name>THIO_SYNY3</name>
<organism>
    <name type="scientific">Synechocystis sp. (strain ATCC 27184 / PCC 6803 / Kazusa)</name>
    <dbReference type="NCBI Taxonomy" id="1111708"/>
    <lineage>
        <taxon>Bacteria</taxon>
        <taxon>Bacillati</taxon>
        <taxon>Cyanobacteriota</taxon>
        <taxon>Cyanophyceae</taxon>
        <taxon>Synechococcales</taxon>
        <taxon>Merismopediaceae</taxon>
        <taxon>Synechocystis</taxon>
    </lineage>
</organism>
<keyword id="KW-0903">Direct protein sequencing</keyword>
<keyword id="KW-1015">Disulfide bond</keyword>
<keyword id="KW-0249">Electron transport</keyword>
<keyword id="KW-0676">Redox-active center</keyword>
<keyword id="KW-1185">Reference proteome</keyword>
<keyword id="KW-0813">Transport</keyword>
<gene>
    <name type="primary">trxA</name>
    <name type="ordered locus">slr0623</name>
</gene>
<evidence type="ECO:0000255" key="1">
    <source>
        <dbReference type="PROSITE-ProRule" id="PRU00691"/>
    </source>
</evidence>
<evidence type="ECO:0000269" key="2">
    <source>
    </source>
</evidence>
<evidence type="ECO:0000305" key="3"/>
<reference key="1">
    <citation type="journal article" date="1996" name="Plant Physiol.">
        <title>The cyanobacterial thioredoxin gene is required for both photoautotrophic and heterotrophic growth.</title>
        <authorList>
            <person name="Navarro F."/>
            <person name="Florencio F.J."/>
        </authorList>
    </citation>
    <scope>NUCLEOTIDE SEQUENCE [GENOMIC DNA]</scope>
</reference>
<reference key="2">
    <citation type="journal article" date="1995" name="DNA Res.">
        <title>Sequence analysis of the genome of the unicellular cyanobacterium Synechocystis sp. strain PCC6803. I. Sequence features in the 1 Mb region from map positions 64% to 92% of the genome.</title>
        <authorList>
            <person name="Kaneko T."/>
            <person name="Tanaka A."/>
            <person name="Sato S."/>
            <person name="Kotani H."/>
            <person name="Sazuka T."/>
            <person name="Miyajima N."/>
            <person name="Sugiura M."/>
            <person name="Tabata S."/>
        </authorList>
    </citation>
    <scope>NUCLEOTIDE SEQUENCE [LARGE SCALE GENOMIC DNA]</scope>
    <source>
        <strain>ATCC 27184 / PCC 6803 / N-1</strain>
    </source>
</reference>
<reference key="3">
    <citation type="journal article" date="1996" name="DNA Res.">
        <title>Sequence analysis of the genome of the unicellular cyanobacterium Synechocystis sp. strain PCC6803. II. Sequence determination of the entire genome and assignment of potential protein-coding regions.</title>
        <authorList>
            <person name="Kaneko T."/>
            <person name="Sato S."/>
            <person name="Kotani H."/>
            <person name="Tanaka A."/>
            <person name="Asamizu E."/>
            <person name="Nakamura Y."/>
            <person name="Miyajima N."/>
            <person name="Hirosawa M."/>
            <person name="Sugiura M."/>
            <person name="Sasamoto S."/>
            <person name="Kimura T."/>
            <person name="Hosouchi T."/>
            <person name="Matsuno A."/>
            <person name="Muraki A."/>
            <person name="Nakazaki N."/>
            <person name="Naruo K."/>
            <person name="Okumura S."/>
            <person name="Shimpo S."/>
            <person name="Takeuchi C."/>
            <person name="Wada T."/>
            <person name="Watanabe A."/>
            <person name="Yamada M."/>
            <person name="Yasuda M."/>
            <person name="Tabata S."/>
        </authorList>
    </citation>
    <scope>NUCLEOTIDE SEQUENCE [LARGE SCALE GENOMIC DNA]</scope>
    <source>
        <strain>ATCC 27184 / PCC 6803 / Kazusa</strain>
    </source>
</reference>
<reference key="4">
    <citation type="journal article" date="1997" name="Electrophoresis">
        <title>Towards a proteome project of cyanobacterium Synechocystis sp. strain PCC6803: linking 130 protein spots with their respective genes.</title>
        <authorList>
            <person name="Sazuka T."/>
            <person name="Ohara O."/>
        </authorList>
    </citation>
    <scope>PROTEIN SEQUENCE OF 2-18</scope>
</reference>
<feature type="initiator methionine" description="Removed" evidence="2">
    <location>
        <position position="1"/>
    </location>
</feature>
<feature type="chain" id="PRO_0000120138" description="Thioredoxin">
    <location>
        <begin position="2"/>
        <end position="107"/>
    </location>
</feature>
<feature type="domain" description="Thioredoxin" evidence="1">
    <location>
        <begin position="2"/>
        <end position="107"/>
    </location>
</feature>
<feature type="disulfide bond" description="Redox-active" evidence="1">
    <location>
        <begin position="32"/>
        <end position="35"/>
    </location>
</feature>
<comment type="function">
    <text>Component of the thioredoxin-thioredoxin reductase system. Participates in various redox reactions through the reversible oxidation of its active center dithiol to a disulfide and catalyzes dithiol-disulfide exchange reactions.</text>
</comment>
<comment type="interaction">
    <interactant intactId="EBI-862916">
        <id>P52231</id>
    </interactant>
    <interactant intactId="EBI-862826">
        <id>Q55544</id>
        <label>apcE</label>
    </interactant>
    <organismsDiffer>false</organismsDiffer>
    <experiments>4</experiments>
</comment>
<comment type="interaction">
    <interactant intactId="EBI-862916">
        <id>P52231</id>
    </interactant>
    <interactant intactId="EBI-862317">
        <id>P77973</id>
        <label>argG</label>
    </interactant>
    <organismsDiffer>false</organismsDiffer>
    <experiments>2</experiments>
</comment>
<comment type="interaction">
    <interactant intactId="EBI-862916">
        <id>P52231</id>
    </interactant>
    <interactant intactId="EBI-862277">
        <id>P54205</id>
        <label>cbbL</label>
    </interactant>
    <organismsDiffer>false</organismsDiffer>
    <experiments>3</experiments>
</comment>
<comment type="interaction">
    <interactant intactId="EBI-862916">
        <id>P52231</id>
    </interactant>
    <interactant intactId="EBI-862848">
        <id>P72758</id>
        <label>ccmM</label>
    </interactant>
    <organismsDiffer>false</organismsDiffer>
    <experiments>2</experiments>
</comment>
<comment type="interaction">
    <interactant intactId="EBI-862916">
        <id>P52231</id>
    </interactant>
    <interactant intactId="EBI-862177">
        <id>P28371</id>
        <label>fusA</label>
    </interactant>
    <organismsDiffer>false</organismsDiffer>
    <experiments>2</experiments>
</comment>
<comment type="interaction">
    <interactant intactId="EBI-862916">
        <id>P52231</id>
    </interactant>
    <interactant intactId="EBI-862093">
        <id>P55037</id>
        <label>gltB</label>
    </interactant>
    <organismsDiffer>false</organismsDiffer>
    <experiments>2</experiments>
</comment>
<comment type="interaction">
    <interactant intactId="EBI-862916">
        <id>P52231</id>
    </interactant>
    <interactant intactId="EBI-862119">
        <id>Q05972</id>
        <label>groEL1</label>
    </interactant>
    <organismsDiffer>false</organismsDiffer>
    <experiments>4</experiments>
</comment>
<comment type="interaction">
    <interactant intactId="EBI-862916">
        <id>P52231</id>
    </interactant>
    <interactant intactId="EBI-862197">
        <id>P74643</id>
        <label>pgm</label>
    </interactant>
    <organismsDiffer>false</organismsDiffer>
    <experiments>2</experiments>
</comment>
<comment type="interaction">
    <interactant intactId="EBI-862916">
        <id>P52231</id>
    </interactant>
    <interactant intactId="EBI-862716">
        <id>P72586</id>
        <label>rfbD</label>
    </interactant>
    <organismsDiffer>false</organismsDiffer>
    <experiments>2</experiments>
</comment>
<comment type="interaction">
    <interactant intactId="EBI-862916">
        <id>P52231</id>
    </interactant>
    <interactant intactId="EBI-862866">
        <id>P73314</id>
        <label>rpsC</label>
    </interactant>
    <organismsDiffer>false</organismsDiffer>
    <experiments>5</experiments>
</comment>
<comment type="interaction">
    <interactant intactId="EBI-862916">
        <id>P52231</id>
    </interactant>
    <interactant intactId="EBI-862835">
        <id>P72854</id>
        <label>sir</label>
    </interactant>
    <organismsDiffer>false</organismsDiffer>
    <experiments>3</experiments>
</comment>
<comment type="interaction">
    <interactant intactId="EBI-862916">
        <id>P52231</id>
    </interactant>
    <interactant intactId="EBI-862771">
        <id>P73728</id>
        <label>sll1621</label>
    </interactant>
    <organismsDiffer>false</organismsDiffer>
    <experiments>3</experiments>
</comment>
<comment type="interaction">
    <interactant intactId="EBI-862916">
        <id>P52231</id>
    </interactant>
    <interactant intactId="EBI-862753">
        <id>P73348</id>
        <label>slr1198</label>
    </interactant>
    <organismsDiffer>false</organismsDiffer>
    <experiments>4</experiments>
</comment>
<comment type="interaction">
    <interactant intactId="EBI-862916">
        <id>P52231</id>
    </interactant>
    <interactant intactId="EBI-862703">
        <id>P74227</id>
        <label>tuf</label>
    </interactant>
    <organismsDiffer>false</organismsDiffer>
    <experiments>5</experiments>
</comment>
<comment type="similarity">
    <text evidence="3">Belongs to the thioredoxin family.</text>
</comment>
<accession>P52231</accession>
<dbReference type="EMBL" id="X80486">
    <property type="protein sequence ID" value="CAA56653.1"/>
    <property type="molecule type" value="Genomic_DNA"/>
</dbReference>
<dbReference type="EMBL" id="BA000022">
    <property type="protein sequence ID" value="BAA10623.1"/>
    <property type="molecule type" value="Genomic_DNA"/>
</dbReference>
<dbReference type="PIR" id="S46958">
    <property type="entry name" value="S46958"/>
</dbReference>
<dbReference type="SMR" id="P52231"/>
<dbReference type="FunCoup" id="P52231">
    <property type="interactions" value="360"/>
</dbReference>
<dbReference type="IntAct" id="P52231">
    <property type="interactions" value="103"/>
</dbReference>
<dbReference type="STRING" id="1148.gene:10500127"/>
<dbReference type="PaxDb" id="1148-1208455"/>
<dbReference type="EnsemblBacteria" id="BAA10623">
    <property type="protein sequence ID" value="BAA10623"/>
    <property type="gene ID" value="BAA10623"/>
</dbReference>
<dbReference type="KEGG" id="syn:slr0623"/>
<dbReference type="eggNOG" id="COG3118">
    <property type="taxonomic scope" value="Bacteria"/>
</dbReference>
<dbReference type="InParanoid" id="P52231"/>
<dbReference type="PhylomeDB" id="P52231"/>
<dbReference type="Proteomes" id="UP000001425">
    <property type="component" value="Chromosome"/>
</dbReference>
<dbReference type="GO" id="GO:0005737">
    <property type="term" value="C:cytoplasm"/>
    <property type="evidence" value="ECO:0000318"/>
    <property type="project" value="GO_Central"/>
</dbReference>
<dbReference type="GO" id="GO:0015035">
    <property type="term" value="F:protein-disulfide reductase activity"/>
    <property type="evidence" value="ECO:0000318"/>
    <property type="project" value="GO_Central"/>
</dbReference>
<dbReference type="CDD" id="cd02947">
    <property type="entry name" value="TRX_family"/>
    <property type="match status" value="1"/>
</dbReference>
<dbReference type="FunFam" id="3.40.30.10:FF:000001">
    <property type="entry name" value="Thioredoxin"/>
    <property type="match status" value="1"/>
</dbReference>
<dbReference type="Gene3D" id="3.40.30.10">
    <property type="entry name" value="Glutaredoxin"/>
    <property type="match status" value="1"/>
</dbReference>
<dbReference type="InterPro" id="IPR005746">
    <property type="entry name" value="Thioredoxin"/>
</dbReference>
<dbReference type="InterPro" id="IPR036249">
    <property type="entry name" value="Thioredoxin-like_sf"/>
</dbReference>
<dbReference type="InterPro" id="IPR017937">
    <property type="entry name" value="Thioredoxin_CS"/>
</dbReference>
<dbReference type="InterPro" id="IPR013766">
    <property type="entry name" value="Thioredoxin_domain"/>
</dbReference>
<dbReference type="NCBIfam" id="TIGR01068">
    <property type="entry name" value="thioredoxin"/>
    <property type="match status" value="1"/>
</dbReference>
<dbReference type="PANTHER" id="PTHR45663">
    <property type="entry name" value="GEO12009P1"/>
    <property type="match status" value="1"/>
</dbReference>
<dbReference type="PANTHER" id="PTHR45663:SF11">
    <property type="entry name" value="GEO12009P1"/>
    <property type="match status" value="1"/>
</dbReference>
<dbReference type="Pfam" id="PF00085">
    <property type="entry name" value="Thioredoxin"/>
    <property type="match status" value="1"/>
</dbReference>
<dbReference type="PIRSF" id="PIRSF000077">
    <property type="entry name" value="Thioredoxin"/>
    <property type="match status" value="1"/>
</dbReference>
<dbReference type="PRINTS" id="PR00421">
    <property type="entry name" value="THIOREDOXIN"/>
</dbReference>
<dbReference type="SUPFAM" id="SSF52833">
    <property type="entry name" value="Thioredoxin-like"/>
    <property type="match status" value="1"/>
</dbReference>
<dbReference type="PROSITE" id="PS00194">
    <property type="entry name" value="THIOREDOXIN_1"/>
    <property type="match status" value="1"/>
</dbReference>
<dbReference type="PROSITE" id="PS51352">
    <property type="entry name" value="THIOREDOXIN_2"/>
    <property type="match status" value="1"/>
</dbReference>
<proteinExistence type="evidence at protein level"/>
<sequence length="107" mass="11749">MSATPQVSDASFKEDVLDSELPVLVDFWAPWCGPCRMVAPVVDEISQQYEGKVKVVKLNTDENPNTASQYGIRSIPTLMIFKGGQRVDMVVGAVPKTTLASTLEKYL</sequence>
<protein>
    <recommendedName>
        <fullName>Thioredoxin</fullName>
        <shortName>Trx</shortName>
    </recommendedName>
</protein>